<sequence length="396" mass="42302">MMTGKSAPRRLSIFGSTGSIGQNTLNVVDHLGGRENFEISVLTGSGNVELLARQAKSSGARLAVTANDRHYESLKSELSGTGIAVASGKSGLMEAADRDVDWVMAAIVGTAGLAPTLAAARRGADIALANKECLVSAGDLFIAAIREGGGRLLPVDSEHNAIFQVLEENQRHAVERVILTASGGPFRTASLRDMADVTVETARAHPNWSMGLKISIDSASMFNKALEMIEALHLFSLRPEQIEVIFHPQSIIHSMVGYTDGSVLAQLGAPDMRTAIGYALSFPRRPNLPVERLDFAKLARLDFEAPDEVRFPALRLARLAMTRGGVQGAVLNGAKEVALEAFIEGRLSFLAMAEVTERVMDDLAGLPQAAGMDDVFAADREARQRAAELMTLAIAE</sequence>
<organism>
    <name type="scientific">Rhizobium johnstonii (strain DSM 114642 / LMG 32736 / 3841)</name>
    <name type="common">Rhizobium leguminosarum bv. viciae</name>
    <dbReference type="NCBI Taxonomy" id="216596"/>
    <lineage>
        <taxon>Bacteria</taxon>
        <taxon>Pseudomonadati</taxon>
        <taxon>Pseudomonadota</taxon>
        <taxon>Alphaproteobacteria</taxon>
        <taxon>Hyphomicrobiales</taxon>
        <taxon>Rhizobiaceae</taxon>
        <taxon>Rhizobium/Agrobacterium group</taxon>
        <taxon>Rhizobium</taxon>
        <taxon>Rhizobium johnstonii</taxon>
    </lineage>
</organism>
<keyword id="KW-0414">Isoprene biosynthesis</keyword>
<keyword id="KW-0464">Manganese</keyword>
<keyword id="KW-0479">Metal-binding</keyword>
<keyword id="KW-0521">NADP</keyword>
<keyword id="KW-0560">Oxidoreductase</keyword>
<gene>
    <name evidence="1" type="primary">dxr</name>
    <name type="ordered locus">RL4372</name>
</gene>
<reference key="1">
    <citation type="journal article" date="2006" name="Genome Biol.">
        <title>The genome of Rhizobium leguminosarum has recognizable core and accessory components.</title>
        <authorList>
            <person name="Young J.P.W."/>
            <person name="Crossman L.C."/>
            <person name="Johnston A.W.B."/>
            <person name="Thomson N.R."/>
            <person name="Ghazoui Z.F."/>
            <person name="Hull K.H."/>
            <person name="Wexler M."/>
            <person name="Curson A.R.J."/>
            <person name="Todd J.D."/>
            <person name="Poole P.S."/>
            <person name="Mauchline T.H."/>
            <person name="East A.K."/>
            <person name="Quail M.A."/>
            <person name="Churcher C."/>
            <person name="Arrowsmith C."/>
            <person name="Cherevach I."/>
            <person name="Chillingworth T."/>
            <person name="Clarke K."/>
            <person name="Cronin A."/>
            <person name="Davis P."/>
            <person name="Fraser A."/>
            <person name="Hance Z."/>
            <person name="Hauser H."/>
            <person name="Jagels K."/>
            <person name="Moule S."/>
            <person name="Mungall K."/>
            <person name="Norbertczak H."/>
            <person name="Rabbinowitsch E."/>
            <person name="Sanders M."/>
            <person name="Simmonds M."/>
            <person name="Whitehead S."/>
            <person name="Parkhill J."/>
        </authorList>
    </citation>
    <scope>NUCLEOTIDE SEQUENCE [LARGE SCALE GENOMIC DNA]</scope>
    <source>
        <strain>DSM 114642 / LMG 32736 / 3841</strain>
    </source>
</reference>
<comment type="function">
    <text evidence="1">Catalyzes the NADPH-dependent rearrangement and reduction of 1-deoxy-D-xylulose-5-phosphate (DXP) to 2-C-methyl-D-erythritol 4-phosphate (MEP).</text>
</comment>
<comment type="catalytic activity">
    <reaction evidence="1">
        <text>2-C-methyl-D-erythritol 4-phosphate + NADP(+) = 1-deoxy-D-xylulose 5-phosphate + NADPH + H(+)</text>
        <dbReference type="Rhea" id="RHEA:13717"/>
        <dbReference type="ChEBI" id="CHEBI:15378"/>
        <dbReference type="ChEBI" id="CHEBI:57783"/>
        <dbReference type="ChEBI" id="CHEBI:57792"/>
        <dbReference type="ChEBI" id="CHEBI:58262"/>
        <dbReference type="ChEBI" id="CHEBI:58349"/>
        <dbReference type="EC" id="1.1.1.267"/>
    </reaction>
    <physiologicalReaction direction="right-to-left" evidence="1">
        <dbReference type="Rhea" id="RHEA:13719"/>
    </physiologicalReaction>
</comment>
<comment type="cofactor">
    <cofactor evidence="1">
        <name>Mg(2+)</name>
        <dbReference type="ChEBI" id="CHEBI:18420"/>
    </cofactor>
    <cofactor evidence="1">
        <name>Mn(2+)</name>
        <dbReference type="ChEBI" id="CHEBI:29035"/>
    </cofactor>
</comment>
<comment type="pathway">
    <text evidence="1">Isoprenoid biosynthesis; isopentenyl diphosphate biosynthesis via DXP pathway; isopentenyl diphosphate from 1-deoxy-D-xylulose 5-phosphate: step 1/6.</text>
</comment>
<comment type="similarity">
    <text evidence="1">Belongs to the DXR family.</text>
</comment>
<proteinExistence type="inferred from homology"/>
<evidence type="ECO:0000255" key="1">
    <source>
        <dbReference type="HAMAP-Rule" id="MF_00183"/>
    </source>
</evidence>
<name>DXR_RHIJ3</name>
<dbReference type="EC" id="1.1.1.267" evidence="1"/>
<dbReference type="EMBL" id="AM236080">
    <property type="protein sequence ID" value="CAK09859.1"/>
    <property type="molecule type" value="Genomic_DNA"/>
</dbReference>
<dbReference type="RefSeq" id="WP_011653754.1">
    <property type="nucleotide sequence ID" value="NC_008380.1"/>
</dbReference>
<dbReference type="SMR" id="Q1MB26"/>
<dbReference type="EnsemblBacteria" id="CAK09859">
    <property type="protein sequence ID" value="CAK09859"/>
    <property type="gene ID" value="RL4372"/>
</dbReference>
<dbReference type="KEGG" id="rle:RL4372"/>
<dbReference type="eggNOG" id="COG0743">
    <property type="taxonomic scope" value="Bacteria"/>
</dbReference>
<dbReference type="HOGENOM" id="CLU_035714_4_0_5"/>
<dbReference type="UniPathway" id="UPA00056">
    <property type="reaction ID" value="UER00092"/>
</dbReference>
<dbReference type="Proteomes" id="UP000006575">
    <property type="component" value="Chromosome"/>
</dbReference>
<dbReference type="GO" id="GO:0030604">
    <property type="term" value="F:1-deoxy-D-xylulose-5-phosphate reductoisomerase activity"/>
    <property type="evidence" value="ECO:0007669"/>
    <property type="project" value="UniProtKB-UniRule"/>
</dbReference>
<dbReference type="GO" id="GO:0030145">
    <property type="term" value="F:manganese ion binding"/>
    <property type="evidence" value="ECO:0007669"/>
    <property type="project" value="TreeGrafter"/>
</dbReference>
<dbReference type="GO" id="GO:0070402">
    <property type="term" value="F:NADPH binding"/>
    <property type="evidence" value="ECO:0007669"/>
    <property type="project" value="InterPro"/>
</dbReference>
<dbReference type="GO" id="GO:0051484">
    <property type="term" value="P:isopentenyl diphosphate biosynthetic process, methylerythritol 4-phosphate pathway involved in terpenoid biosynthetic process"/>
    <property type="evidence" value="ECO:0007669"/>
    <property type="project" value="TreeGrafter"/>
</dbReference>
<dbReference type="FunFam" id="3.40.50.720:FF:000045">
    <property type="entry name" value="1-deoxy-D-xylulose 5-phosphate reductoisomerase"/>
    <property type="match status" value="1"/>
</dbReference>
<dbReference type="Gene3D" id="1.10.1740.10">
    <property type="match status" value="1"/>
</dbReference>
<dbReference type="Gene3D" id="3.40.50.720">
    <property type="entry name" value="NAD(P)-binding Rossmann-like Domain"/>
    <property type="match status" value="1"/>
</dbReference>
<dbReference type="HAMAP" id="MF_00183">
    <property type="entry name" value="DXP_reductoisom"/>
    <property type="match status" value="1"/>
</dbReference>
<dbReference type="InterPro" id="IPR003821">
    <property type="entry name" value="DXP_reductoisomerase"/>
</dbReference>
<dbReference type="InterPro" id="IPR013644">
    <property type="entry name" value="DXP_reductoisomerase_C"/>
</dbReference>
<dbReference type="InterPro" id="IPR013512">
    <property type="entry name" value="DXP_reductoisomerase_N"/>
</dbReference>
<dbReference type="InterPro" id="IPR026877">
    <property type="entry name" value="DXPR_C"/>
</dbReference>
<dbReference type="InterPro" id="IPR036169">
    <property type="entry name" value="DXPR_C_sf"/>
</dbReference>
<dbReference type="InterPro" id="IPR036291">
    <property type="entry name" value="NAD(P)-bd_dom_sf"/>
</dbReference>
<dbReference type="NCBIfam" id="TIGR00243">
    <property type="entry name" value="Dxr"/>
    <property type="match status" value="1"/>
</dbReference>
<dbReference type="PANTHER" id="PTHR30525">
    <property type="entry name" value="1-DEOXY-D-XYLULOSE 5-PHOSPHATE REDUCTOISOMERASE"/>
    <property type="match status" value="1"/>
</dbReference>
<dbReference type="PANTHER" id="PTHR30525:SF0">
    <property type="entry name" value="1-DEOXY-D-XYLULOSE 5-PHOSPHATE REDUCTOISOMERASE, CHLOROPLASTIC"/>
    <property type="match status" value="1"/>
</dbReference>
<dbReference type="Pfam" id="PF08436">
    <property type="entry name" value="DXP_redisom_C"/>
    <property type="match status" value="1"/>
</dbReference>
<dbReference type="Pfam" id="PF02670">
    <property type="entry name" value="DXP_reductoisom"/>
    <property type="match status" value="1"/>
</dbReference>
<dbReference type="Pfam" id="PF13288">
    <property type="entry name" value="DXPR_C"/>
    <property type="match status" value="1"/>
</dbReference>
<dbReference type="PIRSF" id="PIRSF006205">
    <property type="entry name" value="Dxp_reductismrs"/>
    <property type="match status" value="1"/>
</dbReference>
<dbReference type="SUPFAM" id="SSF69055">
    <property type="entry name" value="1-deoxy-D-xylulose-5-phosphate reductoisomerase, C-terminal domain"/>
    <property type="match status" value="1"/>
</dbReference>
<dbReference type="SUPFAM" id="SSF55347">
    <property type="entry name" value="Glyceraldehyde-3-phosphate dehydrogenase-like, C-terminal domain"/>
    <property type="match status" value="1"/>
</dbReference>
<dbReference type="SUPFAM" id="SSF51735">
    <property type="entry name" value="NAD(P)-binding Rossmann-fold domains"/>
    <property type="match status" value="1"/>
</dbReference>
<protein>
    <recommendedName>
        <fullName evidence="1">1-deoxy-D-xylulose 5-phosphate reductoisomerase</fullName>
        <shortName evidence="1">DXP reductoisomerase</shortName>
        <ecNumber evidence="1">1.1.1.267</ecNumber>
    </recommendedName>
    <alternativeName>
        <fullName evidence="1">1-deoxyxylulose-5-phosphate reductoisomerase</fullName>
    </alternativeName>
    <alternativeName>
        <fullName evidence="1">2-C-methyl-D-erythritol 4-phosphate synthase</fullName>
    </alternativeName>
</protein>
<feature type="chain" id="PRO_1000020298" description="1-deoxy-D-xylulose 5-phosphate reductoisomerase">
    <location>
        <begin position="1"/>
        <end position="396"/>
    </location>
</feature>
<feature type="binding site" evidence="1">
    <location>
        <position position="17"/>
    </location>
    <ligand>
        <name>NADPH</name>
        <dbReference type="ChEBI" id="CHEBI:57783"/>
    </ligand>
</feature>
<feature type="binding site" evidence="1">
    <location>
        <position position="18"/>
    </location>
    <ligand>
        <name>NADPH</name>
        <dbReference type="ChEBI" id="CHEBI:57783"/>
    </ligand>
</feature>
<feature type="binding site" evidence="1">
    <location>
        <position position="19"/>
    </location>
    <ligand>
        <name>NADPH</name>
        <dbReference type="ChEBI" id="CHEBI:57783"/>
    </ligand>
</feature>
<feature type="binding site" evidence="1">
    <location>
        <position position="20"/>
    </location>
    <ligand>
        <name>NADPH</name>
        <dbReference type="ChEBI" id="CHEBI:57783"/>
    </ligand>
</feature>
<feature type="binding site" evidence="1">
    <location>
        <position position="47"/>
    </location>
    <ligand>
        <name>NADPH</name>
        <dbReference type="ChEBI" id="CHEBI:57783"/>
    </ligand>
</feature>
<feature type="binding site" evidence="1">
    <location>
        <position position="130"/>
    </location>
    <ligand>
        <name>NADPH</name>
        <dbReference type="ChEBI" id="CHEBI:57783"/>
    </ligand>
</feature>
<feature type="binding site" evidence="1">
    <location>
        <position position="131"/>
    </location>
    <ligand>
        <name>1-deoxy-D-xylulose 5-phosphate</name>
        <dbReference type="ChEBI" id="CHEBI:57792"/>
    </ligand>
</feature>
<feature type="binding site" evidence="1">
    <location>
        <position position="132"/>
    </location>
    <ligand>
        <name>NADPH</name>
        <dbReference type="ChEBI" id="CHEBI:57783"/>
    </ligand>
</feature>
<feature type="binding site" evidence="1">
    <location>
        <position position="156"/>
    </location>
    <ligand>
        <name>Mn(2+)</name>
        <dbReference type="ChEBI" id="CHEBI:29035"/>
    </ligand>
</feature>
<feature type="binding site" evidence="1">
    <location>
        <position position="157"/>
    </location>
    <ligand>
        <name>1-deoxy-D-xylulose 5-phosphate</name>
        <dbReference type="ChEBI" id="CHEBI:57792"/>
    </ligand>
</feature>
<feature type="binding site" evidence="1">
    <location>
        <position position="158"/>
    </location>
    <ligand>
        <name>1-deoxy-D-xylulose 5-phosphate</name>
        <dbReference type="ChEBI" id="CHEBI:57792"/>
    </ligand>
</feature>
<feature type="binding site" evidence="1">
    <location>
        <position position="158"/>
    </location>
    <ligand>
        <name>Mn(2+)</name>
        <dbReference type="ChEBI" id="CHEBI:29035"/>
    </ligand>
</feature>
<feature type="binding site" evidence="1">
    <location>
        <position position="182"/>
    </location>
    <ligand>
        <name>1-deoxy-D-xylulose 5-phosphate</name>
        <dbReference type="ChEBI" id="CHEBI:57792"/>
    </ligand>
</feature>
<feature type="binding site" evidence="1">
    <location>
        <position position="205"/>
    </location>
    <ligand>
        <name>1-deoxy-D-xylulose 5-phosphate</name>
        <dbReference type="ChEBI" id="CHEBI:57792"/>
    </ligand>
</feature>
<feature type="binding site" evidence="1">
    <location>
        <position position="211"/>
    </location>
    <ligand>
        <name>NADPH</name>
        <dbReference type="ChEBI" id="CHEBI:57783"/>
    </ligand>
</feature>
<feature type="binding site" evidence="1">
    <location>
        <position position="218"/>
    </location>
    <ligand>
        <name>1-deoxy-D-xylulose 5-phosphate</name>
        <dbReference type="ChEBI" id="CHEBI:57792"/>
    </ligand>
</feature>
<feature type="binding site" evidence="1">
    <location>
        <position position="223"/>
    </location>
    <ligand>
        <name>1-deoxy-D-xylulose 5-phosphate</name>
        <dbReference type="ChEBI" id="CHEBI:57792"/>
    </ligand>
</feature>
<feature type="binding site" evidence="1">
    <location>
        <position position="224"/>
    </location>
    <ligand>
        <name>1-deoxy-D-xylulose 5-phosphate</name>
        <dbReference type="ChEBI" id="CHEBI:57792"/>
    </ligand>
</feature>
<feature type="binding site" evidence="1">
    <location>
        <position position="227"/>
    </location>
    <ligand>
        <name>1-deoxy-D-xylulose 5-phosphate</name>
        <dbReference type="ChEBI" id="CHEBI:57792"/>
    </ligand>
</feature>
<feature type="binding site" evidence="1">
    <location>
        <position position="227"/>
    </location>
    <ligand>
        <name>Mn(2+)</name>
        <dbReference type="ChEBI" id="CHEBI:29035"/>
    </ligand>
</feature>
<accession>Q1MB26</accession>